<accession>A0R2Y2</accession>
<accession>I7GF33</accession>
<organism>
    <name type="scientific">Mycolicibacterium smegmatis (strain ATCC 700084 / mc(2)155)</name>
    <name type="common">Mycobacterium smegmatis</name>
    <dbReference type="NCBI Taxonomy" id="246196"/>
    <lineage>
        <taxon>Bacteria</taxon>
        <taxon>Bacillati</taxon>
        <taxon>Actinomycetota</taxon>
        <taxon>Actinomycetes</taxon>
        <taxon>Mycobacteriales</taxon>
        <taxon>Mycobacteriaceae</taxon>
        <taxon>Mycolicibacterium</taxon>
    </lineage>
</organism>
<protein>
    <recommendedName>
        <fullName evidence="1">Formate-dependent phosphoribosylglycinamide formyltransferase</fullName>
        <ecNumber evidence="1">6.3.1.21</ecNumber>
    </recommendedName>
    <alternativeName>
        <fullName evidence="1">5'-phosphoribosylglycinamide transformylase 2</fullName>
    </alternativeName>
    <alternativeName>
        <fullName evidence="1">Formate-dependent GAR transformylase</fullName>
    </alternativeName>
    <alternativeName>
        <fullName evidence="1">GAR transformylase 2</fullName>
        <shortName evidence="1">GART 2</shortName>
    </alternativeName>
    <alternativeName>
        <fullName evidence="1">Non-folate glycinamide ribonucleotide transformylase</fullName>
    </alternativeName>
    <alternativeName>
        <fullName evidence="1">Phosphoribosylglycinamide formyltransferase 2</fullName>
    </alternativeName>
</protein>
<proteinExistence type="inferred from homology"/>
<comment type="function">
    <text evidence="1">Involved in the de novo purine biosynthesis. Catalyzes the transfer of formate to 5-phospho-ribosyl-glycinamide (GAR), producing 5-phospho-ribosyl-N-formylglycinamide (FGAR). Formate is provided by PurU via hydrolysis of 10-formyl-tetrahydrofolate.</text>
</comment>
<comment type="catalytic activity">
    <reaction evidence="1">
        <text>N(1)-(5-phospho-beta-D-ribosyl)glycinamide + formate + ATP = N(2)-formyl-N(1)-(5-phospho-beta-D-ribosyl)glycinamide + ADP + phosphate + H(+)</text>
        <dbReference type="Rhea" id="RHEA:24829"/>
        <dbReference type="ChEBI" id="CHEBI:15378"/>
        <dbReference type="ChEBI" id="CHEBI:15740"/>
        <dbReference type="ChEBI" id="CHEBI:30616"/>
        <dbReference type="ChEBI" id="CHEBI:43474"/>
        <dbReference type="ChEBI" id="CHEBI:143788"/>
        <dbReference type="ChEBI" id="CHEBI:147286"/>
        <dbReference type="ChEBI" id="CHEBI:456216"/>
        <dbReference type="EC" id="6.3.1.21"/>
    </reaction>
    <physiologicalReaction direction="left-to-right" evidence="1">
        <dbReference type="Rhea" id="RHEA:24830"/>
    </physiologicalReaction>
</comment>
<comment type="pathway">
    <text evidence="1">Purine metabolism; IMP biosynthesis via de novo pathway; N(2)-formyl-N(1)-(5-phospho-D-ribosyl)glycinamide from N(1)-(5-phospho-D-ribosyl)glycinamide (formate route): step 1/1.</text>
</comment>
<comment type="subunit">
    <text evidence="1">Homodimer.</text>
</comment>
<comment type="similarity">
    <text evidence="1">Belongs to the PurK/PurT family.</text>
</comment>
<name>PURT_MYCS2</name>
<reference key="1">
    <citation type="submission" date="2006-10" db="EMBL/GenBank/DDBJ databases">
        <authorList>
            <person name="Fleischmann R.D."/>
            <person name="Dodson R.J."/>
            <person name="Haft D.H."/>
            <person name="Merkel J.S."/>
            <person name="Nelson W.C."/>
            <person name="Fraser C.M."/>
        </authorList>
    </citation>
    <scope>NUCLEOTIDE SEQUENCE [LARGE SCALE GENOMIC DNA]</scope>
    <source>
        <strain>ATCC 700084 / mc(2)155</strain>
    </source>
</reference>
<reference key="2">
    <citation type="journal article" date="2007" name="Genome Biol.">
        <title>Interrupted coding sequences in Mycobacterium smegmatis: authentic mutations or sequencing errors?</title>
        <authorList>
            <person name="Deshayes C."/>
            <person name="Perrodou E."/>
            <person name="Gallien S."/>
            <person name="Euphrasie D."/>
            <person name="Schaeffer C."/>
            <person name="Van-Dorsselaer A."/>
            <person name="Poch O."/>
            <person name="Lecompte O."/>
            <person name="Reyrat J.-M."/>
        </authorList>
    </citation>
    <scope>NUCLEOTIDE SEQUENCE [LARGE SCALE GENOMIC DNA]</scope>
    <source>
        <strain>ATCC 700084 / mc(2)155</strain>
    </source>
</reference>
<reference key="3">
    <citation type="journal article" date="2009" name="Genome Res.">
        <title>Ortho-proteogenomics: multiple proteomes investigation through orthology and a new MS-based protocol.</title>
        <authorList>
            <person name="Gallien S."/>
            <person name="Perrodou E."/>
            <person name="Carapito C."/>
            <person name="Deshayes C."/>
            <person name="Reyrat J.-M."/>
            <person name="Van Dorsselaer A."/>
            <person name="Poch O."/>
            <person name="Schaeffer C."/>
            <person name="Lecompte O."/>
        </authorList>
    </citation>
    <scope>NUCLEOTIDE SEQUENCE [LARGE SCALE GENOMIC DNA]</scope>
    <source>
        <strain>ATCC 700084 / mc(2)155</strain>
    </source>
</reference>
<feature type="chain" id="PRO_0000319188" description="Formate-dependent phosphoribosylglycinamide formyltransferase">
    <location>
        <begin position="1"/>
        <end position="400"/>
    </location>
</feature>
<feature type="domain" description="ATP-grasp" evidence="1">
    <location>
        <begin position="120"/>
        <end position="315"/>
    </location>
</feature>
<feature type="binding site" evidence="1">
    <location>
        <begin position="22"/>
        <end position="23"/>
    </location>
    <ligand>
        <name>N(1)-(5-phospho-beta-D-ribosyl)glycinamide</name>
        <dbReference type="ChEBI" id="CHEBI:143788"/>
    </ligand>
</feature>
<feature type="binding site" evidence="1">
    <location>
        <position position="82"/>
    </location>
    <ligand>
        <name>N(1)-(5-phospho-beta-D-ribosyl)glycinamide</name>
        <dbReference type="ChEBI" id="CHEBI:143788"/>
    </ligand>
</feature>
<feature type="binding site" evidence="1">
    <location>
        <position position="115"/>
    </location>
    <ligand>
        <name>ATP</name>
        <dbReference type="ChEBI" id="CHEBI:30616"/>
    </ligand>
</feature>
<feature type="binding site" evidence="1">
    <location>
        <position position="157"/>
    </location>
    <ligand>
        <name>ATP</name>
        <dbReference type="ChEBI" id="CHEBI:30616"/>
    </ligand>
</feature>
<feature type="binding site" evidence="1">
    <location>
        <begin position="162"/>
        <end position="167"/>
    </location>
    <ligand>
        <name>ATP</name>
        <dbReference type="ChEBI" id="CHEBI:30616"/>
    </ligand>
</feature>
<feature type="binding site" evidence="1">
    <location>
        <begin position="197"/>
        <end position="200"/>
    </location>
    <ligand>
        <name>ATP</name>
        <dbReference type="ChEBI" id="CHEBI:30616"/>
    </ligand>
</feature>
<feature type="binding site" evidence="1">
    <location>
        <position position="205"/>
    </location>
    <ligand>
        <name>ATP</name>
        <dbReference type="ChEBI" id="CHEBI:30616"/>
    </ligand>
</feature>
<feature type="binding site" evidence="1">
    <location>
        <position position="274"/>
    </location>
    <ligand>
        <name>Mg(2+)</name>
        <dbReference type="ChEBI" id="CHEBI:18420"/>
    </ligand>
</feature>
<feature type="binding site" evidence="1">
    <location>
        <position position="286"/>
    </location>
    <ligand>
        <name>Mg(2+)</name>
        <dbReference type="ChEBI" id="CHEBI:18420"/>
    </ligand>
</feature>
<feature type="binding site" evidence="1">
    <location>
        <position position="293"/>
    </location>
    <ligand>
        <name>N(1)-(5-phospho-beta-D-ribosyl)glycinamide</name>
        <dbReference type="ChEBI" id="CHEBI:143788"/>
    </ligand>
</feature>
<feature type="binding site" evidence="1">
    <location>
        <position position="362"/>
    </location>
    <ligand>
        <name>N(1)-(5-phospho-beta-D-ribosyl)glycinamide</name>
        <dbReference type="ChEBI" id="CHEBI:143788"/>
    </ligand>
</feature>
<feature type="binding site" evidence="1">
    <location>
        <begin position="369"/>
        <end position="370"/>
    </location>
    <ligand>
        <name>N(1)-(5-phospho-beta-D-ribosyl)glycinamide</name>
        <dbReference type="ChEBI" id="CHEBI:143788"/>
    </ligand>
</feature>
<gene>
    <name evidence="1" type="primary">purT</name>
    <name type="ordered locus">MSMEG_5274</name>
    <name type="ordered locus">MSMEI_5135</name>
</gene>
<dbReference type="EC" id="6.3.1.21" evidence="1"/>
<dbReference type="EMBL" id="CP000480">
    <property type="protein sequence ID" value="ABK75984.1"/>
    <property type="molecule type" value="Genomic_DNA"/>
</dbReference>
<dbReference type="EMBL" id="CP001663">
    <property type="protein sequence ID" value="AFP41579.1"/>
    <property type="molecule type" value="Genomic_DNA"/>
</dbReference>
<dbReference type="RefSeq" id="WP_003896675.1">
    <property type="nucleotide sequence ID" value="NZ_SIJM01000014.1"/>
</dbReference>
<dbReference type="RefSeq" id="YP_889520.1">
    <property type="nucleotide sequence ID" value="NC_008596.1"/>
</dbReference>
<dbReference type="SMR" id="A0R2Y2"/>
<dbReference type="STRING" id="246196.MSMEG_5274"/>
<dbReference type="PaxDb" id="246196-MSMEI_5135"/>
<dbReference type="GeneID" id="93459932"/>
<dbReference type="KEGG" id="msb:LJ00_26080"/>
<dbReference type="KEGG" id="msg:MSMEI_5135"/>
<dbReference type="KEGG" id="msm:MSMEG_5274"/>
<dbReference type="PATRIC" id="fig|246196.19.peg.5145"/>
<dbReference type="eggNOG" id="COG0027">
    <property type="taxonomic scope" value="Bacteria"/>
</dbReference>
<dbReference type="OrthoDB" id="9804625at2"/>
<dbReference type="UniPathway" id="UPA00074">
    <property type="reaction ID" value="UER00127"/>
</dbReference>
<dbReference type="Proteomes" id="UP000000757">
    <property type="component" value="Chromosome"/>
</dbReference>
<dbReference type="Proteomes" id="UP000006158">
    <property type="component" value="Chromosome"/>
</dbReference>
<dbReference type="GO" id="GO:0005829">
    <property type="term" value="C:cytosol"/>
    <property type="evidence" value="ECO:0007669"/>
    <property type="project" value="TreeGrafter"/>
</dbReference>
<dbReference type="GO" id="GO:0005524">
    <property type="term" value="F:ATP binding"/>
    <property type="evidence" value="ECO:0007669"/>
    <property type="project" value="UniProtKB-UniRule"/>
</dbReference>
<dbReference type="GO" id="GO:0000287">
    <property type="term" value="F:magnesium ion binding"/>
    <property type="evidence" value="ECO:0007669"/>
    <property type="project" value="InterPro"/>
</dbReference>
<dbReference type="GO" id="GO:0043815">
    <property type="term" value="F:phosphoribosylglycinamide formyltransferase 2 activity"/>
    <property type="evidence" value="ECO:0007669"/>
    <property type="project" value="UniProtKB-UniRule"/>
</dbReference>
<dbReference type="GO" id="GO:0004644">
    <property type="term" value="F:phosphoribosylglycinamide formyltransferase activity"/>
    <property type="evidence" value="ECO:0007669"/>
    <property type="project" value="InterPro"/>
</dbReference>
<dbReference type="GO" id="GO:0006189">
    <property type="term" value="P:'de novo' IMP biosynthetic process"/>
    <property type="evidence" value="ECO:0007669"/>
    <property type="project" value="UniProtKB-UniRule"/>
</dbReference>
<dbReference type="FunFam" id="3.30.1490.20:FF:000013">
    <property type="entry name" value="Formate-dependent phosphoribosylglycinamide formyltransferase"/>
    <property type="match status" value="1"/>
</dbReference>
<dbReference type="Gene3D" id="3.40.50.20">
    <property type="match status" value="1"/>
</dbReference>
<dbReference type="Gene3D" id="3.30.1490.20">
    <property type="entry name" value="ATP-grasp fold, A domain"/>
    <property type="match status" value="1"/>
</dbReference>
<dbReference type="Gene3D" id="3.30.470.20">
    <property type="entry name" value="ATP-grasp fold, B domain"/>
    <property type="match status" value="1"/>
</dbReference>
<dbReference type="HAMAP" id="MF_01643">
    <property type="entry name" value="PurT"/>
    <property type="match status" value="1"/>
</dbReference>
<dbReference type="InterPro" id="IPR011761">
    <property type="entry name" value="ATP-grasp"/>
</dbReference>
<dbReference type="InterPro" id="IPR003135">
    <property type="entry name" value="ATP-grasp_carboxylate-amine"/>
</dbReference>
<dbReference type="InterPro" id="IPR013815">
    <property type="entry name" value="ATP_grasp_subdomain_1"/>
</dbReference>
<dbReference type="InterPro" id="IPR016185">
    <property type="entry name" value="PreATP-grasp_dom_sf"/>
</dbReference>
<dbReference type="InterPro" id="IPR005862">
    <property type="entry name" value="PurT"/>
</dbReference>
<dbReference type="InterPro" id="IPR054350">
    <property type="entry name" value="PurT/PurK_preATP-grasp"/>
</dbReference>
<dbReference type="InterPro" id="IPR048740">
    <property type="entry name" value="PurT_C"/>
</dbReference>
<dbReference type="InterPro" id="IPR011054">
    <property type="entry name" value="Rudment_hybrid_motif"/>
</dbReference>
<dbReference type="NCBIfam" id="NF006766">
    <property type="entry name" value="PRK09288.1"/>
    <property type="match status" value="1"/>
</dbReference>
<dbReference type="NCBIfam" id="TIGR01142">
    <property type="entry name" value="purT"/>
    <property type="match status" value="1"/>
</dbReference>
<dbReference type="PANTHER" id="PTHR43055">
    <property type="entry name" value="FORMATE-DEPENDENT PHOSPHORIBOSYLGLYCINAMIDE FORMYLTRANSFERASE"/>
    <property type="match status" value="1"/>
</dbReference>
<dbReference type="PANTHER" id="PTHR43055:SF1">
    <property type="entry name" value="FORMATE-DEPENDENT PHOSPHORIBOSYLGLYCINAMIDE FORMYLTRANSFERASE"/>
    <property type="match status" value="1"/>
</dbReference>
<dbReference type="Pfam" id="PF02222">
    <property type="entry name" value="ATP-grasp"/>
    <property type="match status" value="1"/>
</dbReference>
<dbReference type="Pfam" id="PF21244">
    <property type="entry name" value="PurT_C"/>
    <property type="match status" value="1"/>
</dbReference>
<dbReference type="Pfam" id="PF22660">
    <property type="entry name" value="RS_preATP-grasp-like"/>
    <property type="match status" value="1"/>
</dbReference>
<dbReference type="SUPFAM" id="SSF56059">
    <property type="entry name" value="Glutathione synthetase ATP-binding domain-like"/>
    <property type="match status" value="1"/>
</dbReference>
<dbReference type="SUPFAM" id="SSF52440">
    <property type="entry name" value="PreATP-grasp domain"/>
    <property type="match status" value="1"/>
</dbReference>
<dbReference type="SUPFAM" id="SSF51246">
    <property type="entry name" value="Rudiment single hybrid motif"/>
    <property type="match status" value="1"/>
</dbReference>
<dbReference type="PROSITE" id="PS50975">
    <property type="entry name" value="ATP_GRASP"/>
    <property type="match status" value="1"/>
</dbReference>
<evidence type="ECO:0000255" key="1">
    <source>
        <dbReference type="HAMAP-Rule" id="MF_01643"/>
    </source>
</evidence>
<sequence>MTTIGTPLSPRATKVMLLGSGELGREVLIALQRLGVETIAVDRYENAPGHQVAHHARTIAMSDPDQLRALIEAERPDLVVPEIEAIATPVLEALEAEGVTTVIPTARATRLTMDREGIRRLAAETLGVPTSPYRFCDSLAELQAAIDDEIGYPCVVKPVMSSSGKGQSKINGPDEVAAAWEYAMAGGRVSHTRIIVEGFVDFDYEITLLTVRARGADGEIATQFCEPIGHRQVGGDYVESWQPHPMPATALERAQEIAGAVTGNLGGQGIFGVELFVKGDQVWFSEVSPRPHDTGMVTMVTQWQNEFELHARAILGLPVDTTLRAPGASAVIYGGVDATGVVFDGVDAALQVPHTDIRLFGKPESFVKRRMGVALAFDDDVQTARRNAAEAASRMKPRAV</sequence>
<keyword id="KW-0067">ATP-binding</keyword>
<keyword id="KW-0436">Ligase</keyword>
<keyword id="KW-0460">Magnesium</keyword>
<keyword id="KW-0479">Metal-binding</keyword>
<keyword id="KW-0547">Nucleotide-binding</keyword>
<keyword id="KW-0658">Purine biosynthesis</keyword>
<keyword id="KW-1185">Reference proteome</keyword>